<name>NANR_ECO55</name>
<evidence type="ECO:0000255" key="1">
    <source>
        <dbReference type="HAMAP-Rule" id="MF_01236"/>
    </source>
</evidence>
<evidence type="ECO:0000256" key="2">
    <source>
        <dbReference type="SAM" id="MobiDB-lite"/>
    </source>
</evidence>
<protein>
    <recommendedName>
        <fullName evidence="1">HTH-type transcriptional repressor NanR</fullName>
    </recommendedName>
</protein>
<comment type="function">
    <text evidence="1">Transcriptional repressor that controls expression of the genes required for the catabolism of sialic acids.</text>
</comment>
<comment type="similarity">
    <text evidence="1">Belongs to the NanR family.</text>
</comment>
<reference key="1">
    <citation type="journal article" date="2009" name="PLoS Genet.">
        <title>Organised genome dynamics in the Escherichia coli species results in highly diverse adaptive paths.</title>
        <authorList>
            <person name="Touchon M."/>
            <person name="Hoede C."/>
            <person name="Tenaillon O."/>
            <person name="Barbe V."/>
            <person name="Baeriswyl S."/>
            <person name="Bidet P."/>
            <person name="Bingen E."/>
            <person name="Bonacorsi S."/>
            <person name="Bouchier C."/>
            <person name="Bouvet O."/>
            <person name="Calteau A."/>
            <person name="Chiapello H."/>
            <person name="Clermont O."/>
            <person name="Cruveiller S."/>
            <person name="Danchin A."/>
            <person name="Diard M."/>
            <person name="Dossat C."/>
            <person name="Karoui M.E."/>
            <person name="Frapy E."/>
            <person name="Garry L."/>
            <person name="Ghigo J.M."/>
            <person name="Gilles A.M."/>
            <person name="Johnson J."/>
            <person name="Le Bouguenec C."/>
            <person name="Lescat M."/>
            <person name="Mangenot S."/>
            <person name="Martinez-Jehanne V."/>
            <person name="Matic I."/>
            <person name="Nassif X."/>
            <person name="Oztas S."/>
            <person name="Petit M.A."/>
            <person name="Pichon C."/>
            <person name="Rouy Z."/>
            <person name="Ruf C.S."/>
            <person name="Schneider D."/>
            <person name="Tourret J."/>
            <person name="Vacherie B."/>
            <person name="Vallenet D."/>
            <person name="Medigue C."/>
            <person name="Rocha E.P.C."/>
            <person name="Denamur E."/>
        </authorList>
    </citation>
    <scope>NUCLEOTIDE SEQUENCE [LARGE SCALE GENOMIC DNA]</scope>
    <source>
        <strain>55989 / EAEC</strain>
    </source>
</reference>
<dbReference type="EMBL" id="CU928145">
    <property type="protein sequence ID" value="CAU99886.1"/>
    <property type="molecule type" value="Genomic_DNA"/>
</dbReference>
<dbReference type="RefSeq" id="WP_000523844.1">
    <property type="nucleotide sequence ID" value="NC_011748.1"/>
</dbReference>
<dbReference type="SMR" id="B7LHT2"/>
<dbReference type="GeneID" id="75173394"/>
<dbReference type="KEGG" id="eck:EC55989_3639"/>
<dbReference type="HOGENOM" id="CLU_017584_9_1_6"/>
<dbReference type="Proteomes" id="UP000000746">
    <property type="component" value="Chromosome"/>
</dbReference>
<dbReference type="GO" id="GO:0003677">
    <property type="term" value="F:DNA binding"/>
    <property type="evidence" value="ECO:0007669"/>
    <property type="project" value="UniProtKB-KW"/>
</dbReference>
<dbReference type="GO" id="GO:0003700">
    <property type="term" value="F:DNA-binding transcription factor activity"/>
    <property type="evidence" value="ECO:0007669"/>
    <property type="project" value="UniProtKB-UniRule"/>
</dbReference>
<dbReference type="GO" id="GO:0045892">
    <property type="term" value="P:negative regulation of DNA-templated transcription"/>
    <property type="evidence" value="ECO:0007669"/>
    <property type="project" value="UniProtKB-UniRule"/>
</dbReference>
<dbReference type="CDD" id="cd07377">
    <property type="entry name" value="WHTH_GntR"/>
    <property type="match status" value="1"/>
</dbReference>
<dbReference type="FunFam" id="1.10.10.10:FF:000150">
    <property type="entry name" value="HTH-type transcriptional repressor NanR"/>
    <property type="match status" value="1"/>
</dbReference>
<dbReference type="FunFam" id="1.20.120.530:FF:000006">
    <property type="entry name" value="HTH-type transcriptional repressor NanR"/>
    <property type="match status" value="1"/>
</dbReference>
<dbReference type="Gene3D" id="1.20.120.530">
    <property type="entry name" value="GntR ligand-binding domain-like"/>
    <property type="match status" value="1"/>
</dbReference>
<dbReference type="Gene3D" id="1.10.10.10">
    <property type="entry name" value="Winged helix-like DNA-binding domain superfamily/Winged helix DNA-binding domain"/>
    <property type="match status" value="1"/>
</dbReference>
<dbReference type="HAMAP" id="MF_01236">
    <property type="entry name" value="HTH_NanR"/>
    <property type="match status" value="1"/>
</dbReference>
<dbReference type="InterPro" id="IPR011711">
    <property type="entry name" value="GntR_C"/>
</dbReference>
<dbReference type="InterPro" id="IPR008920">
    <property type="entry name" value="TF_FadR/GntR_C"/>
</dbReference>
<dbReference type="InterPro" id="IPR000524">
    <property type="entry name" value="Tscrpt_reg_HTH_GntR"/>
</dbReference>
<dbReference type="InterPro" id="IPR023730">
    <property type="entry name" value="Tscrpt_reg_NanR"/>
</dbReference>
<dbReference type="InterPro" id="IPR036388">
    <property type="entry name" value="WH-like_DNA-bd_sf"/>
</dbReference>
<dbReference type="InterPro" id="IPR036390">
    <property type="entry name" value="WH_DNA-bd_sf"/>
</dbReference>
<dbReference type="NCBIfam" id="NF003011">
    <property type="entry name" value="PRK03837.1"/>
    <property type="match status" value="1"/>
</dbReference>
<dbReference type="PANTHER" id="PTHR43537:SF53">
    <property type="entry name" value="HTH-TYPE TRANSCRIPTIONAL REPRESSOR NANR"/>
    <property type="match status" value="1"/>
</dbReference>
<dbReference type="PANTHER" id="PTHR43537">
    <property type="entry name" value="TRANSCRIPTIONAL REGULATOR, GNTR FAMILY"/>
    <property type="match status" value="1"/>
</dbReference>
<dbReference type="Pfam" id="PF07729">
    <property type="entry name" value="FCD"/>
    <property type="match status" value="1"/>
</dbReference>
<dbReference type="Pfam" id="PF00392">
    <property type="entry name" value="GntR"/>
    <property type="match status" value="1"/>
</dbReference>
<dbReference type="PRINTS" id="PR00035">
    <property type="entry name" value="HTHGNTR"/>
</dbReference>
<dbReference type="SMART" id="SM00895">
    <property type="entry name" value="FCD"/>
    <property type="match status" value="1"/>
</dbReference>
<dbReference type="SMART" id="SM00345">
    <property type="entry name" value="HTH_GNTR"/>
    <property type="match status" value="1"/>
</dbReference>
<dbReference type="SUPFAM" id="SSF48008">
    <property type="entry name" value="GntR ligand-binding domain-like"/>
    <property type="match status" value="1"/>
</dbReference>
<dbReference type="SUPFAM" id="SSF46785">
    <property type="entry name" value="Winged helix' DNA-binding domain"/>
    <property type="match status" value="1"/>
</dbReference>
<dbReference type="PROSITE" id="PS50949">
    <property type="entry name" value="HTH_GNTR"/>
    <property type="match status" value="1"/>
</dbReference>
<organism>
    <name type="scientific">Escherichia coli (strain 55989 / EAEC)</name>
    <dbReference type="NCBI Taxonomy" id="585055"/>
    <lineage>
        <taxon>Bacteria</taxon>
        <taxon>Pseudomonadati</taxon>
        <taxon>Pseudomonadota</taxon>
        <taxon>Gammaproteobacteria</taxon>
        <taxon>Enterobacterales</taxon>
        <taxon>Enterobacteriaceae</taxon>
        <taxon>Escherichia</taxon>
    </lineage>
</organism>
<proteinExistence type="inferred from homology"/>
<accession>B7LHT2</accession>
<feature type="chain" id="PRO_1000165000" description="HTH-type transcriptional repressor NanR">
    <location>
        <begin position="1"/>
        <end position="263"/>
    </location>
</feature>
<feature type="domain" description="HTH gntR-type" evidence="1">
    <location>
        <begin position="30"/>
        <end position="98"/>
    </location>
</feature>
<feature type="DNA-binding region" description="H-T-H motif" evidence="1">
    <location>
        <begin position="58"/>
        <end position="77"/>
    </location>
</feature>
<feature type="region of interest" description="Disordered" evidence="2">
    <location>
        <begin position="1"/>
        <end position="22"/>
    </location>
</feature>
<sequence length="263" mass="29494">MGLMNAFDSQTEDSSPAIGRNLRSRPLARKKLSEMVEEELEQMIRRREFGEGEQLPSERELMAFFNVGRPSVREALAALKRKGLVQINNGERARVSRPSADTIIGELSGMAKDFLSHPGGIAHFEQLRLFFESSLVRYAAEHATDEQIDLLAKALEINSQSLDNNAAFIRSDVDFHRVLAEIPGNPIFMAIHVALLDWLIAARPTVADQALHEHNNVSYQQHIAIVDAIRRHDPDEADRALQSHLNSVSATWHAFGQTTNKKK</sequence>
<keyword id="KW-0238">DNA-binding</keyword>
<keyword id="KW-1185">Reference proteome</keyword>
<keyword id="KW-0678">Repressor</keyword>
<keyword id="KW-0804">Transcription</keyword>
<keyword id="KW-0805">Transcription regulation</keyword>
<gene>
    <name evidence="1" type="primary">nanR</name>
    <name type="ordered locus">EC55989_3639</name>
</gene>